<sequence>MTQTFADQKRKTVETAEFTEDGRYKRKVRSFVLRTGRLSEFQRNMMNDNWGTLGLDYQTEPFDFAKIYGNDNPVVLEIGFGMGKSLVDMAFANPDKNYLGIEVHTPGVGACIAYAVEKGVTNLRVICHDATEILRDSIADGALGGLQLFFPDPWHKAKHHKRRIVQPHFVTQVIQKLGENGFIHMATDWENYAEQMLEVLSANTDLVNTSKNGDYIPRPDFRPLTKFEARGYKLGHGVWDLYFVKK</sequence>
<reference key="1">
    <citation type="journal article" date="1995" name="Science">
        <title>Whole-genome random sequencing and assembly of Haemophilus influenzae Rd.</title>
        <authorList>
            <person name="Fleischmann R.D."/>
            <person name="Adams M.D."/>
            <person name="White O."/>
            <person name="Clayton R.A."/>
            <person name="Kirkness E.F."/>
            <person name="Kerlavage A.R."/>
            <person name="Bult C.J."/>
            <person name="Tomb J.-F."/>
            <person name="Dougherty B.A."/>
            <person name="Merrick J.M."/>
            <person name="McKenney K."/>
            <person name="Sutton G.G."/>
            <person name="FitzHugh W."/>
            <person name="Fields C.A."/>
            <person name="Gocayne J.D."/>
            <person name="Scott J.D."/>
            <person name="Shirley R."/>
            <person name="Liu L.-I."/>
            <person name="Glodek A."/>
            <person name="Kelley J.M."/>
            <person name="Weidman J.F."/>
            <person name="Phillips C.A."/>
            <person name="Spriggs T."/>
            <person name="Hedblom E."/>
            <person name="Cotton M.D."/>
            <person name="Utterback T.R."/>
            <person name="Hanna M.C."/>
            <person name="Nguyen D.T."/>
            <person name="Saudek D.M."/>
            <person name="Brandon R.C."/>
            <person name="Fine L.D."/>
            <person name="Fritchman J.L."/>
            <person name="Fuhrmann J.L."/>
            <person name="Geoghagen N.S.M."/>
            <person name="Gnehm C.L."/>
            <person name="McDonald L.A."/>
            <person name="Small K.V."/>
            <person name="Fraser C.M."/>
            <person name="Smith H.O."/>
            <person name="Venter J.C."/>
        </authorList>
    </citation>
    <scope>NUCLEOTIDE SEQUENCE [LARGE SCALE GENOMIC DNA]</scope>
    <source>
        <strain>ATCC 51907 / DSM 11121 / KW20 / Rd</strain>
    </source>
</reference>
<reference key="2">
    <citation type="journal article" date="2000" name="Electrophoresis">
        <title>Two-dimensional map of the proteome of Haemophilus influenzae.</title>
        <authorList>
            <person name="Langen H."/>
            <person name="Takacs B."/>
            <person name="Evers S."/>
            <person name="Berndt P."/>
            <person name="Lahm H.W."/>
            <person name="Wipf B."/>
            <person name="Gray C."/>
            <person name="Fountoulakis M."/>
        </authorList>
    </citation>
    <scope>IDENTIFICATION BY MASS SPECTROMETRY</scope>
    <source>
        <strain>ATCC 51907 / DSM 11121 / KW20 / Rd</strain>
    </source>
</reference>
<proteinExistence type="evidence at protein level"/>
<organism>
    <name type="scientific">Haemophilus influenzae (strain ATCC 51907 / DSM 11121 / KW20 / Rd)</name>
    <dbReference type="NCBI Taxonomy" id="71421"/>
    <lineage>
        <taxon>Bacteria</taxon>
        <taxon>Pseudomonadati</taxon>
        <taxon>Pseudomonadota</taxon>
        <taxon>Gammaproteobacteria</taxon>
        <taxon>Pasteurellales</taxon>
        <taxon>Pasteurellaceae</taxon>
        <taxon>Haemophilus</taxon>
    </lineage>
</organism>
<gene>
    <name evidence="2" type="primary">trmB</name>
    <name type="ordered locus">HI_0340</name>
</gene>
<dbReference type="EC" id="2.1.1.33" evidence="2"/>
<dbReference type="EMBL" id="L42023">
    <property type="protein sequence ID" value="AAC22002.1"/>
    <property type="molecule type" value="Genomic_DNA"/>
</dbReference>
<dbReference type="PIR" id="F64148">
    <property type="entry name" value="F64148"/>
</dbReference>
<dbReference type="RefSeq" id="NP_438504.1">
    <property type="nucleotide sequence ID" value="NC_000907.1"/>
</dbReference>
<dbReference type="SMR" id="P44648"/>
<dbReference type="STRING" id="71421.HI_0340"/>
<dbReference type="EnsemblBacteria" id="AAC22002">
    <property type="protein sequence ID" value="AAC22002"/>
    <property type="gene ID" value="HI_0340"/>
</dbReference>
<dbReference type="KEGG" id="hin:HI_0340"/>
<dbReference type="PATRIC" id="fig|71421.8.peg.357"/>
<dbReference type="eggNOG" id="COG0220">
    <property type="taxonomic scope" value="Bacteria"/>
</dbReference>
<dbReference type="HOGENOM" id="CLU_050910_0_1_6"/>
<dbReference type="OrthoDB" id="9802090at2"/>
<dbReference type="PhylomeDB" id="P44648"/>
<dbReference type="BioCyc" id="HINF71421:G1GJ1-356-MONOMER"/>
<dbReference type="UniPathway" id="UPA00989"/>
<dbReference type="Proteomes" id="UP000000579">
    <property type="component" value="Chromosome"/>
</dbReference>
<dbReference type="GO" id="GO:0043527">
    <property type="term" value="C:tRNA methyltransferase complex"/>
    <property type="evidence" value="ECO:0000318"/>
    <property type="project" value="GO_Central"/>
</dbReference>
<dbReference type="GO" id="GO:0008176">
    <property type="term" value="F:tRNA (guanine(46)-N7)-methyltransferase activity"/>
    <property type="evidence" value="ECO:0000318"/>
    <property type="project" value="GO_Central"/>
</dbReference>
<dbReference type="GO" id="GO:0036265">
    <property type="term" value="P:RNA (guanine-N7)-methylation"/>
    <property type="evidence" value="ECO:0000318"/>
    <property type="project" value="GO_Central"/>
</dbReference>
<dbReference type="GO" id="GO:0030488">
    <property type="term" value="P:tRNA methylation"/>
    <property type="evidence" value="ECO:0000318"/>
    <property type="project" value="GO_Central"/>
</dbReference>
<dbReference type="FunFam" id="3.40.50.150:FF:000035">
    <property type="entry name" value="tRNA (guanine-N(7)-)-methyltransferase"/>
    <property type="match status" value="1"/>
</dbReference>
<dbReference type="Gene3D" id="3.40.50.150">
    <property type="entry name" value="Vaccinia Virus protein VP39"/>
    <property type="match status" value="1"/>
</dbReference>
<dbReference type="HAMAP" id="MF_01057">
    <property type="entry name" value="tRNA_methyltr_TrmB"/>
    <property type="match status" value="1"/>
</dbReference>
<dbReference type="InterPro" id="IPR029063">
    <property type="entry name" value="SAM-dependent_MTases_sf"/>
</dbReference>
<dbReference type="InterPro" id="IPR003358">
    <property type="entry name" value="tRNA_(Gua-N-7)_MeTrfase_Trmb"/>
</dbReference>
<dbReference type="InterPro" id="IPR055361">
    <property type="entry name" value="tRNA_methyltr_TrmB_bact"/>
</dbReference>
<dbReference type="NCBIfam" id="TIGR00091">
    <property type="entry name" value="tRNA (guanosine(46)-N7)-methyltransferase TrmB"/>
    <property type="match status" value="1"/>
</dbReference>
<dbReference type="PANTHER" id="PTHR23417">
    <property type="entry name" value="3-DEOXY-D-MANNO-OCTULOSONIC-ACID TRANSFERASE/TRNA GUANINE-N 7 - -METHYLTRANSFERASE"/>
    <property type="match status" value="1"/>
</dbReference>
<dbReference type="PANTHER" id="PTHR23417:SF14">
    <property type="entry name" value="PENTACOTRIPEPTIDE-REPEAT REGION OF PRORP DOMAIN-CONTAINING PROTEIN"/>
    <property type="match status" value="1"/>
</dbReference>
<dbReference type="Pfam" id="PF02390">
    <property type="entry name" value="Methyltransf_4"/>
    <property type="match status" value="1"/>
</dbReference>
<dbReference type="SUPFAM" id="SSF53335">
    <property type="entry name" value="S-adenosyl-L-methionine-dependent methyltransferases"/>
    <property type="match status" value="1"/>
</dbReference>
<dbReference type="PROSITE" id="PS51625">
    <property type="entry name" value="SAM_MT_TRMB"/>
    <property type="match status" value="1"/>
</dbReference>
<protein>
    <recommendedName>
        <fullName evidence="2">tRNA (guanine-N(7)-)-methyltransferase</fullName>
        <ecNumber evidence="2">2.1.1.33</ecNumber>
    </recommendedName>
    <alternativeName>
        <fullName evidence="2">tRNA (guanine(46)-N(7))-methyltransferase</fullName>
    </alternativeName>
    <alternativeName>
        <fullName evidence="2">tRNA(m7G46)-methyltransferase</fullName>
    </alternativeName>
</protein>
<name>TRMB_HAEIN</name>
<evidence type="ECO:0000250" key="1"/>
<evidence type="ECO:0000255" key="2">
    <source>
        <dbReference type="HAMAP-Rule" id="MF_01057"/>
    </source>
</evidence>
<comment type="function">
    <text evidence="2">Catalyzes the formation of N(7)-methylguanine at position 46 (m7G46) in tRNA.</text>
</comment>
<comment type="catalytic activity">
    <reaction evidence="2">
        <text>guanosine(46) in tRNA + S-adenosyl-L-methionine = N(7)-methylguanosine(46) in tRNA + S-adenosyl-L-homocysteine</text>
        <dbReference type="Rhea" id="RHEA:42708"/>
        <dbReference type="Rhea" id="RHEA-COMP:10188"/>
        <dbReference type="Rhea" id="RHEA-COMP:10189"/>
        <dbReference type="ChEBI" id="CHEBI:57856"/>
        <dbReference type="ChEBI" id="CHEBI:59789"/>
        <dbReference type="ChEBI" id="CHEBI:74269"/>
        <dbReference type="ChEBI" id="CHEBI:74480"/>
        <dbReference type="EC" id="2.1.1.33"/>
    </reaction>
</comment>
<comment type="pathway">
    <text evidence="2">tRNA modification; N(7)-methylguanine-tRNA biosynthesis.</text>
</comment>
<comment type="similarity">
    <text evidence="2">Belongs to the class I-like SAM-binding methyltransferase superfamily. TrmB family.</text>
</comment>
<accession>P44648</accession>
<feature type="chain" id="PRO_0000171333" description="tRNA (guanine-N(7)-)-methyltransferase">
    <location>
        <begin position="1"/>
        <end position="246"/>
    </location>
</feature>
<feature type="active site" evidence="1">
    <location>
        <position position="152"/>
    </location>
</feature>
<feature type="binding site" evidence="2">
    <location>
        <position position="77"/>
    </location>
    <ligand>
        <name>S-adenosyl-L-methionine</name>
        <dbReference type="ChEBI" id="CHEBI:59789"/>
    </ligand>
</feature>
<feature type="binding site" evidence="2">
    <location>
        <position position="102"/>
    </location>
    <ligand>
        <name>S-adenosyl-L-methionine</name>
        <dbReference type="ChEBI" id="CHEBI:59789"/>
    </ligand>
</feature>
<feature type="binding site" evidence="2">
    <location>
        <position position="129"/>
    </location>
    <ligand>
        <name>S-adenosyl-L-methionine</name>
        <dbReference type="ChEBI" id="CHEBI:59789"/>
    </ligand>
</feature>
<feature type="binding site" evidence="2">
    <location>
        <position position="152"/>
    </location>
    <ligand>
        <name>S-adenosyl-L-methionine</name>
        <dbReference type="ChEBI" id="CHEBI:59789"/>
    </ligand>
</feature>
<feature type="binding site" evidence="2">
    <location>
        <position position="156"/>
    </location>
    <ligand>
        <name>substrate</name>
    </ligand>
</feature>
<feature type="binding site" evidence="2">
    <location>
        <position position="188"/>
    </location>
    <ligand>
        <name>substrate</name>
    </ligand>
</feature>
<feature type="binding site" evidence="2">
    <location>
        <begin position="225"/>
        <end position="228"/>
    </location>
    <ligand>
        <name>substrate</name>
    </ligand>
</feature>
<keyword id="KW-0489">Methyltransferase</keyword>
<keyword id="KW-1185">Reference proteome</keyword>
<keyword id="KW-0949">S-adenosyl-L-methionine</keyword>
<keyword id="KW-0808">Transferase</keyword>
<keyword id="KW-0819">tRNA processing</keyword>